<gene>
    <name evidence="1" type="primary">rpmJ</name>
    <name type="ordered locus">BURPS1710b_3754</name>
</gene>
<dbReference type="EMBL" id="CP000124">
    <property type="protein sequence ID" value="ABA51144.1"/>
    <property type="status" value="ALT_INIT"/>
    <property type="molecule type" value="Genomic_DNA"/>
</dbReference>
<dbReference type="RefSeq" id="WP_004199844.1">
    <property type="nucleotide sequence ID" value="NC_007434.1"/>
</dbReference>
<dbReference type="SMR" id="Q3JMT5"/>
<dbReference type="EnsemblBacteria" id="ABA51144">
    <property type="protein sequence ID" value="ABA51144"/>
    <property type="gene ID" value="BURPS1710b_3754"/>
</dbReference>
<dbReference type="GeneID" id="98107138"/>
<dbReference type="KEGG" id="bpm:BURPS1710b_3754"/>
<dbReference type="HOGENOM" id="CLU_135723_6_2_4"/>
<dbReference type="Proteomes" id="UP000002700">
    <property type="component" value="Chromosome I"/>
</dbReference>
<dbReference type="GO" id="GO:0005737">
    <property type="term" value="C:cytoplasm"/>
    <property type="evidence" value="ECO:0007669"/>
    <property type="project" value="UniProtKB-ARBA"/>
</dbReference>
<dbReference type="GO" id="GO:1990904">
    <property type="term" value="C:ribonucleoprotein complex"/>
    <property type="evidence" value="ECO:0007669"/>
    <property type="project" value="UniProtKB-KW"/>
</dbReference>
<dbReference type="GO" id="GO:0005840">
    <property type="term" value="C:ribosome"/>
    <property type="evidence" value="ECO:0007669"/>
    <property type="project" value="UniProtKB-KW"/>
</dbReference>
<dbReference type="GO" id="GO:0003735">
    <property type="term" value="F:structural constituent of ribosome"/>
    <property type="evidence" value="ECO:0007669"/>
    <property type="project" value="InterPro"/>
</dbReference>
<dbReference type="GO" id="GO:0006412">
    <property type="term" value="P:translation"/>
    <property type="evidence" value="ECO:0007669"/>
    <property type="project" value="UniProtKB-UniRule"/>
</dbReference>
<dbReference type="HAMAP" id="MF_00251">
    <property type="entry name" value="Ribosomal_bL36"/>
    <property type="match status" value="1"/>
</dbReference>
<dbReference type="InterPro" id="IPR000473">
    <property type="entry name" value="Ribosomal_bL36"/>
</dbReference>
<dbReference type="InterPro" id="IPR035977">
    <property type="entry name" value="Ribosomal_bL36_sp"/>
</dbReference>
<dbReference type="NCBIfam" id="TIGR01022">
    <property type="entry name" value="rpmJ_bact"/>
    <property type="match status" value="1"/>
</dbReference>
<dbReference type="PANTHER" id="PTHR42888">
    <property type="entry name" value="50S RIBOSOMAL PROTEIN L36, CHLOROPLASTIC"/>
    <property type="match status" value="1"/>
</dbReference>
<dbReference type="PANTHER" id="PTHR42888:SF1">
    <property type="entry name" value="LARGE RIBOSOMAL SUBUNIT PROTEIN BL36C"/>
    <property type="match status" value="1"/>
</dbReference>
<dbReference type="Pfam" id="PF00444">
    <property type="entry name" value="Ribosomal_L36"/>
    <property type="match status" value="1"/>
</dbReference>
<dbReference type="SUPFAM" id="SSF57840">
    <property type="entry name" value="Ribosomal protein L36"/>
    <property type="match status" value="1"/>
</dbReference>
<dbReference type="PROSITE" id="PS00828">
    <property type="entry name" value="RIBOSOMAL_L36"/>
    <property type="match status" value="1"/>
</dbReference>
<evidence type="ECO:0000255" key="1">
    <source>
        <dbReference type="HAMAP-Rule" id="MF_00251"/>
    </source>
</evidence>
<evidence type="ECO:0000305" key="2"/>
<accession>Q3JMT5</accession>
<sequence>MKVMASVKRICRNCKIIKRKGVVRVICSSDPRHKQRQG</sequence>
<feature type="chain" id="PRO_0000344650" description="Large ribosomal subunit protein bL36">
    <location>
        <begin position="1"/>
        <end position="38"/>
    </location>
</feature>
<keyword id="KW-0687">Ribonucleoprotein</keyword>
<keyword id="KW-0689">Ribosomal protein</keyword>
<protein>
    <recommendedName>
        <fullName evidence="1">Large ribosomal subunit protein bL36</fullName>
    </recommendedName>
    <alternativeName>
        <fullName evidence="2">50S ribosomal protein L36</fullName>
    </alternativeName>
</protein>
<name>RL36_BURP1</name>
<reference key="1">
    <citation type="journal article" date="2010" name="Genome Biol. Evol.">
        <title>Continuing evolution of Burkholderia mallei through genome reduction and large-scale rearrangements.</title>
        <authorList>
            <person name="Losada L."/>
            <person name="Ronning C.M."/>
            <person name="DeShazer D."/>
            <person name="Woods D."/>
            <person name="Fedorova N."/>
            <person name="Kim H.S."/>
            <person name="Shabalina S.A."/>
            <person name="Pearson T.R."/>
            <person name="Brinkac L."/>
            <person name="Tan P."/>
            <person name="Nandi T."/>
            <person name="Crabtree J."/>
            <person name="Badger J."/>
            <person name="Beckstrom-Sternberg S."/>
            <person name="Saqib M."/>
            <person name="Schutzer S.E."/>
            <person name="Keim P."/>
            <person name="Nierman W.C."/>
        </authorList>
    </citation>
    <scope>NUCLEOTIDE SEQUENCE [LARGE SCALE GENOMIC DNA]</scope>
    <source>
        <strain>1710b</strain>
    </source>
</reference>
<proteinExistence type="inferred from homology"/>
<comment type="similarity">
    <text evidence="1">Belongs to the bacterial ribosomal protein bL36 family.</text>
</comment>
<comment type="sequence caution" evidence="2">
    <conflict type="erroneous initiation">
        <sequence resource="EMBL-CDS" id="ABA51144"/>
    </conflict>
</comment>
<organism>
    <name type="scientific">Burkholderia pseudomallei (strain 1710b)</name>
    <dbReference type="NCBI Taxonomy" id="320372"/>
    <lineage>
        <taxon>Bacteria</taxon>
        <taxon>Pseudomonadati</taxon>
        <taxon>Pseudomonadota</taxon>
        <taxon>Betaproteobacteria</taxon>
        <taxon>Burkholderiales</taxon>
        <taxon>Burkholderiaceae</taxon>
        <taxon>Burkholderia</taxon>
        <taxon>pseudomallei group</taxon>
    </lineage>
</organism>